<keyword id="KW-1185">Reference proteome</keyword>
<organismHost>
    <name type="scientific">Acanthamoeba polyphaga</name>
    <name type="common">Amoeba</name>
    <dbReference type="NCBI Taxonomy" id="5757"/>
</organismHost>
<gene>
    <name type="ordered locus">MIMI_R349</name>
</gene>
<sequence>MELISRVFTHGENILLVSSTNKLYIMGNNEYGSCGFKIGTDKTYIESPVYIDIKLDDDDSVKAFYSCNLFTMIHTSKGKIYLSRSFICGGGEIDAYDSESDVGSDAESDAESDAESDSENHTQNNTNTPINNITLINLDSSNNSTQSDNESDNESDNESDNESDQSCSDFDCGPRSDNESDEEVFVDRNDNNSDNIGNSNSIDNESESMTEKAGIILLNEIKTMVDEILSQKNINSVGINDIVIRPSGQYVSNMGYITESGSVSFHTNKNGFLLFKSNVHEILFVEEMFMYSKNNFIYLAIPFKKYQASLRDIAPFHTINKTKNGIKWKYFKIVFPFDTEKIEFCDNFFYTYESNTCYHHVISFYKNVNYYPSWIYFKSEIDINSKNMFFSSDTNSVYVKDNNNVYKYHNFNNSLEKYIDNKLDLDVVIVPDSYRPMEMRLLLKLGITLYSDYNFNGCEDDEEHIFEIMKNQYVPHIIGLNYFESFIVVIVNNPNMLTITTDDGKIFFNIHDITFYKRFYNGIVYLDNGSLFYLTDSEISDQNVWKLTGCQLCELADSTIYSYLFNLPDKIDEIYSSSEFIVLKLIGNKYFYYPVENFDTAQDFKTRCGEISLKNNSVLELVNTSIINRQSKSYHTTVSINIDTDCTTHNSFERLFILTQSLSYSAEYSIRIVDDKNIGFGDGPKIEFCESAIMQFYYKYLIAHNFHTEFNLQEFAKLKPTEIKYLGSMFHMVICQNNSSLPIRLPLAFAVEIYGKEPTIDELEYFACNEDETGFKHIYPAKYNPELVKEFGYESYEHCLKTLCKYNYEDDTDKNILTKKYCEQLAAGFKRYGNIKNIKQMNLPTLDYYISGPYKINRTILINNLVLSGGKDKNNNYLEMFKEFINSLSENELKILLKNWTASTCVRPDNKYRIIIISKSKNAKAGIRFGTCNLEIHIDEKMLDEHNIDTVKEVLITPAQGFKD</sequence>
<protein>
    <recommendedName>
        <fullName>Uncharacterized protein R349</fullName>
    </recommendedName>
</protein>
<reference key="1">
    <citation type="journal article" date="2004" name="Science">
        <title>The 1.2-megabase genome sequence of Mimivirus.</title>
        <authorList>
            <person name="Raoult D."/>
            <person name="Audic S."/>
            <person name="Robert C."/>
            <person name="Abergel C."/>
            <person name="Renesto P."/>
            <person name="Ogata H."/>
            <person name="La Scola B."/>
            <person name="Susan M."/>
            <person name="Claverie J.-M."/>
        </authorList>
    </citation>
    <scope>NUCLEOTIDE SEQUENCE [LARGE SCALE GENOMIC DNA]</scope>
    <source>
        <strain>Rowbotham-Bradford</strain>
    </source>
</reference>
<organism>
    <name type="scientific">Acanthamoeba polyphaga mimivirus</name>
    <name type="common">APMV</name>
    <dbReference type="NCBI Taxonomy" id="212035"/>
    <lineage>
        <taxon>Viruses</taxon>
        <taxon>Varidnaviria</taxon>
        <taxon>Bamfordvirae</taxon>
        <taxon>Nucleocytoviricota</taxon>
        <taxon>Megaviricetes</taxon>
        <taxon>Imitervirales</taxon>
        <taxon>Mimiviridae</taxon>
        <taxon>Megamimivirinae</taxon>
        <taxon>Mimivirus</taxon>
        <taxon>Mimivirus bradfordmassiliense</taxon>
    </lineage>
</organism>
<name>YR349_MIMIV</name>
<accession>Q5UQU3</accession>
<evidence type="ECO:0000256" key="1">
    <source>
        <dbReference type="SAM" id="MobiDB-lite"/>
    </source>
</evidence>
<proteinExistence type="predicted"/>
<dbReference type="EMBL" id="AY653733">
    <property type="protein sequence ID" value="AAV50618.1"/>
    <property type="molecule type" value="Genomic_DNA"/>
</dbReference>
<dbReference type="KEGG" id="vg:9924968"/>
<dbReference type="Proteomes" id="UP000001134">
    <property type="component" value="Genome"/>
</dbReference>
<dbReference type="GO" id="GO:0004842">
    <property type="term" value="F:ubiquitin-protein transferase activity"/>
    <property type="evidence" value="ECO:0007669"/>
    <property type="project" value="InterPro"/>
</dbReference>
<dbReference type="InterPro" id="IPR000569">
    <property type="entry name" value="HECT_dom"/>
</dbReference>
<dbReference type="InterPro" id="IPR035983">
    <property type="entry name" value="Hect_E3_ubiquitin_ligase"/>
</dbReference>
<dbReference type="InterPro" id="IPR009091">
    <property type="entry name" value="RCC1/BLIP-II"/>
</dbReference>
<dbReference type="PANTHER" id="PTHR42264">
    <property type="entry name" value="EPHRIN_REC_LIKE DOMAIN-CONTAINING PROTEIN"/>
    <property type="match status" value="1"/>
</dbReference>
<dbReference type="Pfam" id="PF00632">
    <property type="entry name" value="HECT"/>
    <property type="match status" value="1"/>
</dbReference>
<dbReference type="SUPFAM" id="SSF56204">
    <property type="entry name" value="Hect, E3 ligase catalytic domain"/>
    <property type="match status" value="1"/>
</dbReference>
<dbReference type="SUPFAM" id="SSF50985">
    <property type="entry name" value="RCC1/BLIP-II"/>
    <property type="match status" value="1"/>
</dbReference>
<feature type="chain" id="PRO_0000253423" description="Uncharacterized protein R349">
    <location>
        <begin position="1"/>
        <end position="964"/>
    </location>
</feature>
<feature type="region of interest" description="Disordered" evidence="1">
    <location>
        <begin position="97"/>
        <end position="208"/>
    </location>
</feature>
<feature type="compositionally biased region" description="Acidic residues" evidence="1">
    <location>
        <begin position="97"/>
        <end position="117"/>
    </location>
</feature>
<feature type="compositionally biased region" description="Low complexity" evidence="1">
    <location>
        <begin position="121"/>
        <end position="148"/>
    </location>
</feature>
<feature type="compositionally biased region" description="Acidic residues" evidence="1">
    <location>
        <begin position="149"/>
        <end position="163"/>
    </location>
</feature>
<feature type="compositionally biased region" description="Low complexity" evidence="1">
    <location>
        <begin position="192"/>
        <end position="203"/>
    </location>
</feature>